<gene>
    <name evidence="3" type="primary">MAGT1</name>
    <name type="ORF">RCJMB04_22a7</name>
</gene>
<reference key="1">
    <citation type="journal article" date="2005" name="Genome Biol.">
        <title>Full-length cDNAs from chicken bursal lymphocytes to facilitate gene function analysis.</title>
        <authorList>
            <person name="Caldwell R.B."/>
            <person name="Kierzek A.M."/>
            <person name="Arakawa H."/>
            <person name="Bezzubov Y."/>
            <person name="Zaim J."/>
            <person name="Fiedler P."/>
            <person name="Kutter S."/>
            <person name="Blagodatski A."/>
            <person name="Kostovska D."/>
            <person name="Koter M."/>
            <person name="Plachy J."/>
            <person name="Carninci P."/>
            <person name="Hayashizaki Y."/>
            <person name="Buerstedde J.-M."/>
        </authorList>
    </citation>
    <scope>NUCLEOTIDE SEQUENCE [LARGE SCALE MRNA]</scope>
    <source>
        <strain>CB</strain>
        <tissue>Bursa of Fabricius</tissue>
    </source>
</reference>
<evidence type="ECO:0000250" key="1"/>
<evidence type="ECO:0000250" key="2">
    <source>
        <dbReference type="UniProtKB" id="Q9CQY5"/>
    </source>
</evidence>
<evidence type="ECO:0000250" key="3">
    <source>
        <dbReference type="UniProtKB" id="Q9H0U3"/>
    </source>
</evidence>
<evidence type="ECO:0000255" key="4"/>
<evidence type="ECO:0000305" key="5"/>
<sequence>MAALPVLVLVLLLACGGPRAAGQKRKEMVLSEKVSQLMEWTSKRSVIRMNGDKFRRLVKAPPRNYSVIVMFTALQPHRQCVVCKQADEEYQVLANSWRYSSAFTNKIFFAMVDFDEGSDVFQMLNMNSAPTFINFPAKGKPKRGDTYELQVRGFAAEQLARWVADRTDVNIRVIRPPNYAGPLMLGLLLAVIGGLVYLRGSNLDFLYNKTGWAFAALCFVLAMTSGQMWNHIRGPPYAHKNPHTGQVNYIHGSSQAQFVAETHIVLLFNGGVTLGMVLLHEAATSDMDVGKRKIMCIAGIGLVVFFFSWLLSVFRSKYHGYPYSFLMS</sequence>
<comment type="function">
    <text evidence="2 3">Accessory component of the STT3B-containing form of the N-oligosaccharyl transferase (OST) complex which catalyzes the transfer of a high mannose oligosaccharide from a lipid-linked oligosaccharide donor to an asparagine residue within an Asn-X-Ser/Thr consensus motif in nascent polypeptide chains. Involved in N-glycosylation of STT3B-dependent substrates. Specifically required for the glycosylation of a subset of acceptor sites that are near cysteine residues; in this function seems to act redundantly with TUSC3. In its oxidized form proposed to form transient mixed disulfides with a glycoprotein substrate to facilitate access of STT3B to the unmodified acceptor site. Also has oxidoreductase-independent functions in the STT3B-containing OST complex possibly involving substrate recognition. Could indirectly play a role in Mg(2+) transport in epithelial cells.</text>
</comment>
<comment type="pathway">
    <text evidence="3">Protein modification; protein glycosylation.</text>
</comment>
<comment type="subunit">
    <text evidence="3">Accessory component of the STT3B-containing form of the oligosaccharyltransferase (OST) complex. OST exists in two different complex forms which contain common core subunits RPN1, RPN2, OST48, OST4, DAD1 and TMEM258, either STT3A or STT3B as catalytic subunits, and form-specific accessory subunits. OST can form stable complexes with the Sec61 complex or with both the Sec61 and TRAP complexes.</text>
</comment>
<comment type="subcellular location">
    <subcellularLocation>
        <location evidence="3">Cell membrane</location>
        <topology evidence="3">Multi-pass membrane protein</topology>
    </subcellularLocation>
    <subcellularLocation>
        <location evidence="3">Endoplasmic reticulum</location>
    </subcellularLocation>
    <subcellularLocation>
        <location evidence="1">Endoplasmic reticulum membrane</location>
        <topology evidence="1">Multi-pass membrane protein</topology>
    </subcellularLocation>
</comment>
<comment type="similarity">
    <text evidence="5">Belongs to the OST3/OST6 family.</text>
</comment>
<feature type="signal peptide" evidence="4">
    <location>
        <begin position="1"/>
        <end position="22"/>
    </location>
</feature>
<feature type="chain" id="PRO_0000246060" description="Dolichyl-diphosphooligosaccharide--protein glycosyltransferase subunit MAGT1">
    <location>
        <begin position="23"/>
        <end position="328"/>
    </location>
</feature>
<feature type="topological domain" description="Extracellular" evidence="4">
    <location>
        <begin position="23"/>
        <end position="177"/>
    </location>
</feature>
<feature type="transmembrane region" description="Helical" evidence="4">
    <location>
        <begin position="178"/>
        <end position="198"/>
    </location>
</feature>
<feature type="topological domain" description="Cytoplasmic" evidence="4">
    <location>
        <begin position="199"/>
        <end position="211"/>
    </location>
</feature>
<feature type="transmembrane region" description="Helical" evidence="4">
    <location>
        <begin position="212"/>
        <end position="232"/>
    </location>
</feature>
<feature type="topological domain" description="Extracellular" evidence="4">
    <location>
        <begin position="233"/>
        <end position="257"/>
    </location>
</feature>
<feature type="transmembrane region" description="Helical" evidence="4">
    <location>
        <begin position="258"/>
        <end position="278"/>
    </location>
</feature>
<feature type="topological domain" description="Cytoplasmic" evidence="4">
    <location>
        <begin position="279"/>
        <end position="293"/>
    </location>
</feature>
<feature type="transmembrane region" description="Helical" evidence="4">
    <location>
        <begin position="294"/>
        <end position="314"/>
    </location>
</feature>
<feature type="topological domain" description="Extracellular" evidence="4">
    <location>
        <begin position="315"/>
        <end position="328"/>
    </location>
</feature>
<feature type="domain" description="Thioredoxin">
    <location>
        <begin position="40"/>
        <end position="168"/>
    </location>
</feature>
<feature type="glycosylation site" description="N-linked (GlcNAc...) asparagine" evidence="4">
    <location>
        <position position="64"/>
    </location>
</feature>
<feature type="disulfide bond" description="Redox-active" evidence="1">
    <location>
        <begin position="80"/>
        <end position="83"/>
    </location>
</feature>
<name>MAGT1_CHICK</name>
<organism>
    <name type="scientific">Gallus gallus</name>
    <name type="common">Chicken</name>
    <dbReference type="NCBI Taxonomy" id="9031"/>
    <lineage>
        <taxon>Eukaryota</taxon>
        <taxon>Metazoa</taxon>
        <taxon>Chordata</taxon>
        <taxon>Craniata</taxon>
        <taxon>Vertebrata</taxon>
        <taxon>Euteleostomi</taxon>
        <taxon>Archelosauria</taxon>
        <taxon>Archosauria</taxon>
        <taxon>Dinosauria</taxon>
        <taxon>Saurischia</taxon>
        <taxon>Theropoda</taxon>
        <taxon>Coelurosauria</taxon>
        <taxon>Aves</taxon>
        <taxon>Neognathae</taxon>
        <taxon>Galloanserae</taxon>
        <taxon>Galliformes</taxon>
        <taxon>Phasianidae</taxon>
        <taxon>Phasianinae</taxon>
        <taxon>Gallus</taxon>
    </lineage>
</organism>
<dbReference type="EMBL" id="AJ720628">
    <property type="protein sequence ID" value="CAG32287.1"/>
    <property type="molecule type" value="mRNA"/>
</dbReference>
<dbReference type="RefSeq" id="NP_001006435.1">
    <property type="nucleotide sequence ID" value="NM_001006435.1"/>
</dbReference>
<dbReference type="SMR" id="Q5ZJ06"/>
<dbReference type="FunCoup" id="Q5ZJ06">
    <property type="interactions" value="629"/>
</dbReference>
<dbReference type="STRING" id="9031.ENSGALP00000012744"/>
<dbReference type="GlyCosmos" id="Q5ZJ06">
    <property type="glycosylation" value="1 site, No reported glycans"/>
</dbReference>
<dbReference type="GlyGen" id="Q5ZJ06">
    <property type="glycosylation" value="1 site"/>
</dbReference>
<dbReference type="PaxDb" id="9031-ENSGALP00000012744"/>
<dbReference type="GeneID" id="422332"/>
<dbReference type="KEGG" id="gga:422332"/>
<dbReference type="CTD" id="84061"/>
<dbReference type="VEuPathDB" id="HostDB:geneid_422332"/>
<dbReference type="eggNOG" id="KOG2603">
    <property type="taxonomic scope" value="Eukaryota"/>
</dbReference>
<dbReference type="InParanoid" id="Q5ZJ06"/>
<dbReference type="OrthoDB" id="67566at2759"/>
<dbReference type="PhylomeDB" id="Q5ZJ06"/>
<dbReference type="BRENDA" id="7.2.2.14">
    <property type="organism ID" value="1306"/>
</dbReference>
<dbReference type="UniPathway" id="UPA00378"/>
<dbReference type="PRO" id="PR:Q5ZJ06"/>
<dbReference type="Proteomes" id="UP000000539">
    <property type="component" value="Unassembled WGS sequence"/>
</dbReference>
<dbReference type="GO" id="GO:0008250">
    <property type="term" value="C:oligosaccharyltransferase complex"/>
    <property type="evidence" value="ECO:0000318"/>
    <property type="project" value="GO_Central"/>
</dbReference>
<dbReference type="GO" id="GO:0005886">
    <property type="term" value="C:plasma membrane"/>
    <property type="evidence" value="ECO:0007669"/>
    <property type="project" value="UniProtKB-SubCell"/>
</dbReference>
<dbReference type="GO" id="GO:0018279">
    <property type="term" value="P:protein N-linked glycosylation via asparagine"/>
    <property type="evidence" value="ECO:0000318"/>
    <property type="project" value="GO_Central"/>
</dbReference>
<dbReference type="CDD" id="cd02947">
    <property type="entry name" value="TRX_family"/>
    <property type="match status" value="1"/>
</dbReference>
<dbReference type="FunFam" id="3.40.30.10:FF:000009">
    <property type="entry name" value="Tumor suppressor candidate 3"/>
    <property type="match status" value="1"/>
</dbReference>
<dbReference type="Gene3D" id="3.40.30.10">
    <property type="entry name" value="Glutaredoxin"/>
    <property type="match status" value="1"/>
</dbReference>
<dbReference type="InterPro" id="IPR021149">
    <property type="entry name" value="OligosaccharylTrfase_OST3/OST6"/>
</dbReference>
<dbReference type="InterPro" id="IPR036249">
    <property type="entry name" value="Thioredoxin-like_sf"/>
</dbReference>
<dbReference type="PANTHER" id="PTHR12692">
    <property type="entry name" value="DOLICHYL-DIPHOSPHOOLIGOSACCHARIDE--PROTEIN GLYCOSYLTRANSFERASE-RELATED"/>
    <property type="match status" value="1"/>
</dbReference>
<dbReference type="PANTHER" id="PTHR12692:SF2">
    <property type="entry name" value="MAGNESIUM TRANSPORTER PROTEIN 1"/>
    <property type="match status" value="1"/>
</dbReference>
<dbReference type="Pfam" id="PF04756">
    <property type="entry name" value="OST3_OST6"/>
    <property type="match status" value="1"/>
</dbReference>
<dbReference type="SUPFAM" id="SSF52833">
    <property type="entry name" value="Thioredoxin-like"/>
    <property type="match status" value="1"/>
</dbReference>
<keyword id="KW-1003">Cell membrane</keyword>
<keyword id="KW-1015">Disulfide bond</keyword>
<keyword id="KW-0256">Endoplasmic reticulum</keyword>
<keyword id="KW-0325">Glycoprotein</keyword>
<keyword id="KW-0460">Magnesium</keyword>
<keyword id="KW-0472">Membrane</keyword>
<keyword id="KW-1185">Reference proteome</keyword>
<keyword id="KW-0732">Signal</keyword>
<keyword id="KW-0812">Transmembrane</keyword>
<keyword id="KW-1133">Transmembrane helix</keyword>
<keyword id="KW-0813">Transport</keyword>
<accession>Q5ZJ06</accession>
<proteinExistence type="evidence at transcript level"/>
<protein>
    <recommendedName>
        <fullName>Dolichyl-diphosphooligosaccharide--protein glycosyltransferase subunit MAGT1</fullName>
        <shortName>Oligosaccharyl transferase subunit MAGT1</shortName>
    </recommendedName>
    <alternativeName>
        <fullName evidence="3">Magnesium transporter protein 1</fullName>
        <shortName>MagT1</shortName>
    </alternativeName>
</protein>